<evidence type="ECO:0000255" key="1">
    <source>
        <dbReference type="HAMAP-Rule" id="MF_00475"/>
    </source>
</evidence>
<reference key="1">
    <citation type="journal article" date="2005" name="Nucleic Acids Res.">
        <title>The genome sequence of Salmonella enterica serovar Choleraesuis, a highly invasive and resistant zoonotic pathogen.</title>
        <authorList>
            <person name="Chiu C.-H."/>
            <person name="Tang P."/>
            <person name="Chu C."/>
            <person name="Hu S."/>
            <person name="Bao Q."/>
            <person name="Yu J."/>
            <person name="Chou Y.-Y."/>
            <person name="Wang H.-S."/>
            <person name="Lee Y.-S."/>
        </authorList>
    </citation>
    <scope>NUCLEOTIDE SEQUENCE [LARGE SCALE GENOMIC DNA]</scope>
    <source>
        <strain>SC-B67</strain>
    </source>
</reference>
<proteinExistence type="inferred from homology"/>
<sequence>MTQHSPYSSAIAEQRNQEWLRFVELLRQAYAEDLHLPLLQLMLTPDEREALGTRVRIIEELLRGEMSQRELKTELGAGIATITRGSNSLKSAPVELRHWLEQILLKSA</sequence>
<accession>Q57G28</accession>
<feature type="chain" id="PRO_1000014047" description="Trp operon repressor">
    <location>
        <begin position="1"/>
        <end position="108"/>
    </location>
</feature>
<feature type="DNA-binding region" evidence="1">
    <location>
        <begin position="68"/>
        <end position="91"/>
    </location>
</feature>
<comment type="function">
    <text evidence="1">This protein is an aporepressor. When complexed with L-tryptophan it binds the operator region of the trp operon (5'-ACTAGT-'3') and prevents the initiation of transcription. The complex also regulates trp repressor biosynthesis by binding to its regulatory region.</text>
</comment>
<comment type="subunit">
    <text evidence="1">Homodimer.</text>
</comment>
<comment type="subcellular location">
    <subcellularLocation>
        <location evidence="1">Cytoplasm</location>
    </subcellularLocation>
</comment>
<comment type="similarity">
    <text evidence="1">Belongs to the TrpR family.</text>
</comment>
<organism>
    <name type="scientific">Salmonella choleraesuis (strain SC-B67)</name>
    <dbReference type="NCBI Taxonomy" id="321314"/>
    <lineage>
        <taxon>Bacteria</taxon>
        <taxon>Pseudomonadati</taxon>
        <taxon>Pseudomonadota</taxon>
        <taxon>Gammaproteobacteria</taxon>
        <taxon>Enterobacterales</taxon>
        <taxon>Enterobacteriaceae</taxon>
        <taxon>Salmonella</taxon>
    </lineage>
</organism>
<keyword id="KW-0963">Cytoplasm</keyword>
<keyword id="KW-0238">DNA-binding</keyword>
<keyword id="KW-0678">Repressor</keyword>
<keyword id="KW-0804">Transcription</keyword>
<keyword id="KW-0805">Transcription regulation</keyword>
<protein>
    <recommendedName>
        <fullName evidence="1">Trp operon repressor</fullName>
    </recommendedName>
</protein>
<gene>
    <name evidence="1" type="primary">trpR</name>
    <name type="ordered locus">SCH_4428</name>
</gene>
<dbReference type="EMBL" id="AE017220">
    <property type="protein sequence ID" value="AAX68334.1"/>
    <property type="molecule type" value="Genomic_DNA"/>
</dbReference>
<dbReference type="RefSeq" id="WP_000192005.1">
    <property type="nucleotide sequence ID" value="NC_006905.1"/>
</dbReference>
<dbReference type="SMR" id="Q57G28"/>
<dbReference type="KEGG" id="sec:SCH_4428"/>
<dbReference type="HOGENOM" id="CLU_147939_0_0_6"/>
<dbReference type="Proteomes" id="UP000000538">
    <property type="component" value="Chromosome"/>
</dbReference>
<dbReference type="GO" id="GO:0005737">
    <property type="term" value="C:cytoplasm"/>
    <property type="evidence" value="ECO:0007669"/>
    <property type="project" value="UniProtKB-SubCell"/>
</dbReference>
<dbReference type="GO" id="GO:0003700">
    <property type="term" value="F:DNA-binding transcription factor activity"/>
    <property type="evidence" value="ECO:0007669"/>
    <property type="project" value="InterPro"/>
</dbReference>
<dbReference type="GO" id="GO:0043565">
    <property type="term" value="F:sequence-specific DNA binding"/>
    <property type="evidence" value="ECO:0007669"/>
    <property type="project" value="InterPro"/>
</dbReference>
<dbReference type="GO" id="GO:0045892">
    <property type="term" value="P:negative regulation of DNA-templated transcription"/>
    <property type="evidence" value="ECO:0007669"/>
    <property type="project" value="UniProtKB-UniRule"/>
</dbReference>
<dbReference type="FunFam" id="1.10.1270.10:FF:000001">
    <property type="entry name" value="Trp operon repressor"/>
    <property type="match status" value="1"/>
</dbReference>
<dbReference type="Gene3D" id="1.10.1270.10">
    <property type="entry name" value="TrpR-like"/>
    <property type="match status" value="1"/>
</dbReference>
<dbReference type="HAMAP" id="MF_00475">
    <property type="entry name" value="Trp_repressor"/>
    <property type="match status" value="1"/>
</dbReference>
<dbReference type="InterPro" id="IPR000831">
    <property type="entry name" value="Trp_repress"/>
</dbReference>
<dbReference type="InterPro" id="IPR013335">
    <property type="entry name" value="Trp_repress_bac"/>
</dbReference>
<dbReference type="InterPro" id="IPR010921">
    <property type="entry name" value="Trp_repressor/repl_initiator"/>
</dbReference>
<dbReference type="InterPro" id="IPR038116">
    <property type="entry name" value="TrpR-like_sf"/>
</dbReference>
<dbReference type="NCBIfam" id="TIGR01321">
    <property type="entry name" value="TrpR"/>
    <property type="match status" value="1"/>
</dbReference>
<dbReference type="PANTHER" id="PTHR38025">
    <property type="entry name" value="TRP OPERON REPRESSOR"/>
    <property type="match status" value="1"/>
</dbReference>
<dbReference type="PANTHER" id="PTHR38025:SF1">
    <property type="entry name" value="TRP OPERON REPRESSOR"/>
    <property type="match status" value="1"/>
</dbReference>
<dbReference type="Pfam" id="PF01371">
    <property type="entry name" value="Trp_repressor"/>
    <property type="match status" value="1"/>
</dbReference>
<dbReference type="PIRSF" id="PIRSF003196">
    <property type="entry name" value="Trp_repressor"/>
    <property type="match status" value="1"/>
</dbReference>
<dbReference type="SUPFAM" id="SSF48295">
    <property type="entry name" value="TrpR-like"/>
    <property type="match status" value="1"/>
</dbReference>
<name>TRPR_SALCH</name>